<proteinExistence type="inferred from homology"/>
<accession>B3PM62</accession>
<sequence length="62" mass="7233">MPKMKTKSGLKKRIKITATGKVKRGNAYRSHLAQNKTTKQKRQSRKSSQLSHSDFKRYKELI</sequence>
<gene>
    <name evidence="1" type="primary">rpmI</name>
    <name type="ordered locus">MARTH_orf193</name>
</gene>
<dbReference type="EMBL" id="CP001047">
    <property type="protein sequence ID" value="ACF07114.1"/>
    <property type="molecule type" value="Genomic_DNA"/>
</dbReference>
<dbReference type="RefSeq" id="WP_012498071.1">
    <property type="nucleotide sequence ID" value="NC_011025.1"/>
</dbReference>
<dbReference type="SMR" id="B3PM62"/>
<dbReference type="STRING" id="243272.MARTH_orf193"/>
<dbReference type="KEGG" id="mat:MARTH_orf193"/>
<dbReference type="eggNOG" id="COG0291">
    <property type="taxonomic scope" value="Bacteria"/>
</dbReference>
<dbReference type="HOGENOM" id="CLU_169643_3_1_14"/>
<dbReference type="Proteomes" id="UP000008812">
    <property type="component" value="Chromosome"/>
</dbReference>
<dbReference type="GO" id="GO:0022625">
    <property type="term" value="C:cytosolic large ribosomal subunit"/>
    <property type="evidence" value="ECO:0007669"/>
    <property type="project" value="TreeGrafter"/>
</dbReference>
<dbReference type="GO" id="GO:0003735">
    <property type="term" value="F:structural constituent of ribosome"/>
    <property type="evidence" value="ECO:0007669"/>
    <property type="project" value="InterPro"/>
</dbReference>
<dbReference type="GO" id="GO:0006412">
    <property type="term" value="P:translation"/>
    <property type="evidence" value="ECO:0007669"/>
    <property type="project" value="UniProtKB-UniRule"/>
</dbReference>
<dbReference type="FunFam" id="4.10.410.60:FF:000001">
    <property type="entry name" value="50S ribosomal protein L35"/>
    <property type="match status" value="1"/>
</dbReference>
<dbReference type="Gene3D" id="4.10.410.60">
    <property type="match status" value="1"/>
</dbReference>
<dbReference type="HAMAP" id="MF_00514">
    <property type="entry name" value="Ribosomal_bL35"/>
    <property type="match status" value="1"/>
</dbReference>
<dbReference type="InterPro" id="IPR001706">
    <property type="entry name" value="Ribosomal_bL35"/>
</dbReference>
<dbReference type="InterPro" id="IPR021137">
    <property type="entry name" value="Ribosomal_bL35-like"/>
</dbReference>
<dbReference type="InterPro" id="IPR018265">
    <property type="entry name" value="Ribosomal_bL35_CS"/>
</dbReference>
<dbReference type="InterPro" id="IPR037229">
    <property type="entry name" value="Ribosomal_bL35_sf"/>
</dbReference>
<dbReference type="NCBIfam" id="TIGR00001">
    <property type="entry name" value="rpmI_bact"/>
    <property type="match status" value="1"/>
</dbReference>
<dbReference type="PANTHER" id="PTHR33343">
    <property type="entry name" value="54S RIBOSOMAL PROTEIN BL35M"/>
    <property type="match status" value="1"/>
</dbReference>
<dbReference type="PANTHER" id="PTHR33343:SF1">
    <property type="entry name" value="LARGE RIBOSOMAL SUBUNIT PROTEIN BL35M"/>
    <property type="match status" value="1"/>
</dbReference>
<dbReference type="Pfam" id="PF01632">
    <property type="entry name" value="Ribosomal_L35p"/>
    <property type="match status" value="1"/>
</dbReference>
<dbReference type="PRINTS" id="PR00064">
    <property type="entry name" value="RIBOSOMALL35"/>
</dbReference>
<dbReference type="SUPFAM" id="SSF143034">
    <property type="entry name" value="L35p-like"/>
    <property type="match status" value="1"/>
</dbReference>
<dbReference type="PROSITE" id="PS00936">
    <property type="entry name" value="RIBOSOMAL_L35"/>
    <property type="match status" value="1"/>
</dbReference>
<organism>
    <name type="scientific">Metamycoplasma arthritidis (strain 158L3-1)</name>
    <name type="common">Mycoplasma arthritidis</name>
    <dbReference type="NCBI Taxonomy" id="243272"/>
    <lineage>
        <taxon>Bacteria</taxon>
        <taxon>Bacillati</taxon>
        <taxon>Mycoplasmatota</taxon>
        <taxon>Mycoplasmoidales</taxon>
        <taxon>Metamycoplasmataceae</taxon>
        <taxon>Metamycoplasma</taxon>
    </lineage>
</organism>
<comment type="similarity">
    <text evidence="1">Belongs to the bacterial ribosomal protein bL35 family.</text>
</comment>
<keyword id="KW-1185">Reference proteome</keyword>
<keyword id="KW-0687">Ribonucleoprotein</keyword>
<keyword id="KW-0689">Ribosomal protein</keyword>
<feature type="chain" id="PRO_1000127378" description="Large ribosomal subunit protein bL35">
    <location>
        <begin position="1"/>
        <end position="62"/>
    </location>
</feature>
<feature type="region of interest" description="Disordered" evidence="2">
    <location>
        <begin position="1"/>
        <end position="62"/>
    </location>
</feature>
<feature type="compositionally biased region" description="Basic residues" evidence="2">
    <location>
        <begin position="1"/>
        <end position="26"/>
    </location>
</feature>
<feature type="compositionally biased region" description="Basic and acidic residues" evidence="2">
    <location>
        <begin position="53"/>
        <end position="62"/>
    </location>
</feature>
<name>RL35_META1</name>
<evidence type="ECO:0000255" key="1">
    <source>
        <dbReference type="HAMAP-Rule" id="MF_00514"/>
    </source>
</evidence>
<evidence type="ECO:0000256" key="2">
    <source>
        <dbReference type="SAM" id="MobiDB-lite"/>
    </source>
</evidence>
<evidence type="ECO:0000305" key="3"/>
<protein>
    <recommendedName>
        <fullName evidence="1">Large ribosomal subunit protein bL35</fullName>
    </recommendedName>
    <alternativeName>
        <fullName evidence="3">50S ribosomal protein L35</fullName>
    </alternativeName>
</protein>
<reference key="1">
    <citation type="journal article" date="2008" name="Infect. Immun.">
        <title>Genome of Mycoplasma arthritidis.</title>
        <authorList>
            <person name="Dybvig K."/>
            <person name="Zuhua C."/>
            <person name="Lao P."/>
            <person name="Jordan D.S."/>
            <person name="French C.T."/>
            <person name="Tu A.H."/>
            <person name="Loraine A.E."/>
        </authorList>
    </citation>
    <scope>NUCLEOTIDE SEQUENCE [LARGE SCALE GENOMIC DNA]</scope>
    <source>
        <strain>158L3-1</strain>
    </source>
</reference>